<sequence length="1157" mass="134357">MTLHAYLGRAGTGKSTKMLTEIKQKMKADPLGDPIILIAPTQSTFQLEQAFVNDPELNGSLRTEVLHFERLSHRIFQEVGSYSEQKLSKAATEMMIYNIVQEQQKYLKLYQSQAKYYGFSEKLTEQIQDFKKYAVTPEHLEHFIADKNMQTRTKNKLEDIALIYREFEQRIQNEFITGEDSLQYFIDCMPKSEWLKRADIYIDGFHNFSTIEYLIIKGLIKYAKSVTIILTTDGNHDQFSLFRKPSEVLRHIEEIANELNISIERQYFNQLYRFNNQDLKHLEQEFDVLQINRVACQGHINILESATMREEINEIARRIIVDIRDKQLRYQDIAILYRDESYAYLFDSILPLYNIPYNIDTKRSMTHHPVMEMIRSLIEVIQSNWQVNPMLRLLKTDVLTASYLKSAYLVDLLENFVLERGIYGKRWLDDELFNVEHFSKMGRKAHKLTEDERNTFEQVVKLKKDVIDKILHFEKQMSQAETVKDFATAFYESMEYFELPNQLMTERDELDLNGNHEKAEEIDQIWNGLIQILDDLVLVFGDEPMSMERFLEVFDIGLEQLEFVMIPQTLDQVSIGTMDLAKVDNKQHVYLVGMNDGTMPQPVTASSLITDEEKKYFEQQANVELSPTSDILQMDEAFVCYVAMTRAKGDVTFSYSLMGSSGDDKEISPFLNQIQSLFNQLEITNIPQYHEVNPLSLMQHAKQTKITLFEALRAWLDDEIVADSWLDAYQVIRDSDHLNQGLDYLMSALTFDNETVKLGETLSKDLYGKEINASVSRFEGYQQCPFKHYASHGLKLNERTKYELQNFDLGDIFHSVLKYISERINGDFKQLDLKKIRQLTNEALEEILPKVQFNLLNSSAYYRYLSRRIGAIVETTLSALKYQGTYSKFMPKHFETSFRRKPRTNDELIAQTLTTTQGIPINIRGQIDRIDTYTKNDTSFVNIIDYKSSEGSATLDLTKVYYGMQMQMMTYMDIVLQNKQRLGLTDIVKPGGLLYFHVHEPRIKFKSWSDIDEDKLEQDLIKKFKLSGLVNADQTVIDALDIRLEPKFTSDIVPVGLNKDGSLSKRGSQVADEATIYKFIQHNKENFIETASNIMDGHTEVAPLKYKQKLPCAFCSYQSVCHVDGMIDSKRYRTVDETINPIEAIQNININDEFGGE</sequence>
<evidence type="ECO:0000255" key="1">
    <source>
        <dbReference type="HAMAP-Rule" id="MF_01452"/>
    </source>
</evidence>
<keyword id="KW-0004">4Fe-4S</keyword>
<keyword id="KW-0067">ATP-binding</keyword>
<keyword id="KW-0227">DNA damage</keyword>
<keyword id="KW-0234">DNA repair</keyword>
<keyword id="KW-0238">DNA-binding</keyword>
<keyword id="KW-0269">Exonuclease</keyword>
<keyword id="KW-0347">Helicase</keyword>
<keyword id="KW-0378">Hydrolase</keyword>
<keyword id="KW-0408">Iron</keyword>
<keyword id="KW-0411">Iron-sulfur</keyword>
<keyword id="KW-0479">Metal-binding</keyword>
<keyword id="KW-0540">Nuclease</keyword>
<keyword id="KW-0547">Nucleotide-binding</keyword>
<name>ADDB_STAAM</name>
<feature type="chain" id="PRO_0000379211" description="ATP-dependent helicase/deoxyribonuclease subunit B">
    <location>
        <begin position="1"/>
        <end position="1157"/>
    </location>
</feature>
<feature type="domain" description="UvrD-like helicase ATP-binding" evidence="1">
    <location>
        <begin position="1"/>
        <end position="275"/>
    </location>
</feature>
<feature type="domain" description="UvrD-like helicase C-terminal" evidence="1">
    <location>
        <begin position="269"/>
        <end position="583"/>
    </location>
</feature>
<feature type="binding site" evidence="1">
    <location>
        <begin position="8"/>
        <end position="15"/>
    </location>
    <ligand>
        <name>ATP</name>
        <dbReference type="ChEBI" id="CHEBI:30616"/>
    </ligand>
</feature>
<feature type="binding site" evidence="1">
    <location>
        <position position="784"/>
    </location>
    <ligand>
        <name>[4Fe-4S] cluster</name>
        <dbReference type="ChEBI" id="CHEBI:49883"/>
    </ligand>
</feature>
<feature type="binding site" evidence="1">
    <location>
        <position position="1112"/>
    </location>
    <ligand>
        <name>[4Fe-4S] cluster</name>
        <dbReference type="ChEBI" id="CHEBI:49883"/>
    </ligand>
</feature>
<feature type="binding site" evidence="1">
    <location>
        <position position="1115"/>
    </location>
    <ligand>
        <name>[4Fe-4S] cluster</name>
        <dbReference type="ChEBI" id="CHEBI:49883"/>
    </ligand>
</feature>
<feature type="binding site" evidence="1">
    <location>
        <position position="1121"/>
    </location>
    <ligand>
        <name>[4Fe-4S] cluster</name>
        <dbReference type="ChEBI" id="CHEBI:49883"/>
    </ligand>
</feature>
<gene>
    <name evidence="1" type="primary">addB</name>
    <name type="ordered locus">SAV0966</name>
</gene>
<protein>
    <recommendedName>
        <fullName evidence="1">ATP-dependent helicase/deoxyribonuclease subunit B</fullName>
        <ecNumber evidence="1">3.1.-.-</ecNumber>
    </recommendedName>
    <alternativeName>
        <fullName evidence="1">ATP-dependent helicase/nuclease subunit AddB</fullName>
    </alternativeName>
</protein>
<dbReference type="EC" id="3.1.-.-" evidence="1"/>
<dbReference type="EMBL" id="BA000017">
    <property type="protein sequence ID" value="BAB57128.1"/>
    <property type="molecule type" value="Genomic_DNA"/>
</dbReference>
<dbReference type="RefSeq" id="WP_000172350.1">
    <property type="nucleotide sequence ID" value="NC_002758.2"/>
</dbReference>
<dbReference type="SMR" id="Q99VC4"/>
<dbReference type="KEGG" id="sav:SAV0966"/>
<dbReference type="HOGENOM" id="CLU_007838_0_0_9"/>
<dbReference type="PhylomeDB" id="Q99VC4"/>
<dbReference type="Proteomes" id="UP000002481">
    <property type="component" value="Chromosome"/>
</dbReference>
<dbReference type="GO" id="GO:0051539">
    <property type="term" value="F:4 iron, 4 sulfur cluster binding"/>
    <property type="evidence" value="ECO:0007669"/>
    <property type="project" value="UniProtKB-KW"/>
</dbReference>
<dbReference type="GO" id="GO:0008409">
    <property type="term" value="F:5'-3' exonuclease activity"/>
    <property type="evidence" value="ECO:0007669"/>
    <property type="project" value="UniProtKB-UniRule"/>
</dbReference>
<dbReference type="GO" id="GO:0005524">
    <property type="term" value="F:ATP binding"/>
    <property type="evidence" value="ECO:0007669"/>
    <property type="project" value="UniProtKB-UniRule"/>
</dbReference>
<dbReference type="GO" id="GO:0003690">
    <property type="term" value="F:double-stranded DNA binding"/>
    <property type="evidence" value="ECO:0007669"/>
    <property type="project" value="UniProtKB-UniRule"/>
</dbReference>
<dbReference type="GO" id="GO:0004386">
    <property type="term" value="F:helicase activity"/>
    <property type="evidence" value="ECO:0007669"/>
    <property type="project" value="UniProtKB-KW"/>
</dbReference>
<dbReference type="GO" id="GO:0046872">
    <property type="term" value="F:metal ion binding"/>
    <property type="evidence" value="ECO:0007669"/>
    <property type="project" value="UniProtKB-KW"/>
</dbReference>
<dbReference type="GO" id="GO:0000724">
    <property type="term" value="P:double-strand break repair via homologous recombination"/>
    <property type="evidence" value="ECO:0007669"/>
    <property type="project" value="UniProtKB-UniRule"/>
</dbReference>
<dbReference type="Gene3D" id="3.90.320.10">
    <property type="match status" value="1"/>
</dbReference>
<dbReference type="Gene3D" id="3.40.50.300">
    <property type="entry name" value="P-loop containing nucleotide triphosphate hydrolases"/>
    <property type="match status" value="4"/>
</dbReference>
<dbReference type="HAMAP" id="MF_01452">
    <property type="entry name" value="AddB_type1"/>
    <property type="match status" value="1"/>
</dbReference>
<dbReference type="InterPro" id="IPR049035">
    <property type="entry name" value="ADDB_N"/>
</dbReference>
<dbReference type="InterPro" id="IPR014140">
    <property type="entry name" value="DNA_helicase_suAddB"/>
</dbReference>
<dbReference type="InterPro" id="IPR014017">
    <property type="entry name" value="DNA_helicase_UvrD-like_C"/>
</dbReference>
<dbReference type="InterPro" id="IPR027417">
    <property type="entry name" value="P-loop_NTPase"/>
</dbReference>
<dbReference type="InterPro" id="IPR011604">
    <property type="entry name" value="PDDEXK-like_dom_sf"/>
</dbReference>
<dbReference type="InterPro" id="IPR038726">
    <property type="entry name" value="PDDEXK_AddAB-type"/>
</dbReference>
<dbReference type="NCBIfam" id="TIGR02773">
    <property type="entry name" value="addB_Gpos"/>
    <property type="match status" value="1"/>
</dbReference>
<dbReference type="PANTHER" id="PTHR30591">
    <property type="entry name" value="RECBCD ENZYME SUBUNIT RECC"/>
    <property type="match status" value="1"/>
</dbReference>
<dbReference type="PANTHER" id="PTHR30591:SF1">
    <property type="entry name" value="RECBCD ENZYME SUBUNIT RECC"/>
    <property type="match status" value="1"/>
</dbReference>
<dbReference type="Pfam" id="PF21445">
    <property type="entry name" value="ADDB_N"/>
    <property type="match status" value="1"/>
</dbReference>
<dbReference type="Pfam" id="PF12705">
    <property type="entry name" value="PDDEXK_1"/>
    <property type="match status" value="1"/>
</dbReference>
<dbReference type="Pfam" id="PF13361">
    <property type="entry name" value="UvrD_C"/>
    <property type="match status" value="1"/>
</dbReference>
<dbReference type="SUPFAM" id="SSF52540">
    <property type="entry name" value="P-loop containing nucleoside triphosphate hydrolases"/>
    <property type="match status" value="1"/>
</dbReference>
<dbReference type="PROSITE" id="PS51198">
    <property type="entry name" value="UVRD_HELICASE_ATP_BIND"/>
    <property type="match status" value="1"/>
</dbReference>
<dbReference type="PROSITE" id="PS51217">
    <property type="entry name" value="UVRD_HELICASE_CTER"/>
    <property type="match status" value="1"/>
</dbReference>
<organism>
    <name type="scientific">Staphylococcus aureus (strain Mu50 / ATCC 700699)</name>
    <dbReference type="NCBI Taxonomy" id="158878"/>
    <lineage>
        <taxon>Bacteria</taxon>
        <taxon>Bacillati</taxon>
        <taxon>Bacillota</taxon>
        <taxon>Bacilli</taxon>
        <taxon>Bacillales</taxon>
        <taxon>Staphylococcaceae</taxon>
        <taxon>Staphylococcus</taxon>
    </lineage>
</organism>
<accession>Q99VC4</accession>
<comment type="function">
    <text evidence="1">The heterodimer acts as both an ATP-dependent DNA helicase and an ATP-dependent, dual-direction single-stranded exonuclease. Recognizes the chi site generating a DNA molecule suitable for the initiation of homologous recombination. The AddB subunit has 5' -&gt; 3' nuclease activity but not helicase activity.</text>
</comment>
<comment type="cofactor">
    <cofactor evidence="1">
        <name>Mg(2+)</name>
        <dbReference type="ChEBI" id="CHEBI:18420"/>
    </cofactor>
</comment>
<comment type="cofactor">
    <cofactor evidence="1">
        <name>[4Fe-4S] cluster</name>
        <dbReference type="ChEBI" id="CHEBI:49883"/>
    </cofactor>
    <text evidence="1">Binds 1 [4Fe-4S] cluster.</text>
</comment>
<comment type="subunit">
    <text evidence="1">Heterodimer of AddA and AddB.</text>
</comment>
<comment type="miscellaneous">
    <text evidence="1">Despite having conserved helicase domains, this subunit does not have helicase activity.</text>
</comment>
<comment type="similarity">
    <text evidence="1">Belongs to the helicase family. AddB/RexB type 1 subfamily.</text>
</comment>
<proteinExistence type="inferred from homology"/>
<reference key="1">
    <citation type="journal article" date="2001" name="Lancet">
        <title>Whole genome sequencing of meticillin-resistant Staphylococcus aureus.</title>
        <authorList>
            <person name="Kuroda M."/>
            <person name="Ohta T."/>
            <person name="Uchiyama I."/>
            <person name="Baba T."/>
            <person name="Yuzawa H."/>
            <person name="Kobayashi I."/>
            <person name="Cui L."/>
            <person name="Oguchi A."/>
            <person name="Aoki K."/>
            <person name="Nagai Y."/>
            <person name="Lian J.-Q."/>
            <person name="Ito T."/>
            <person name="Kanamori M."/>
            <person name="Matsumaru H."/>
            <person name="Maruyama A."/>
            <person name="Murakami H."/>
            <person name="Hosoyama A."/>
            <person name="Mizutani-Ui Y."/>
            <person name="Takahashi N.K."/>
            <person name="Sawano T."/>
            <person name="Inoue R."/>
            <person name="Kaito C."/>
            <person name="Sekimizu K."/>
            <person name="Hirakawa H."/>
            <person name="Kuhara S."/>
            <person name="Goto S."/>
            <person name="Yabuzaki J."/>
            <person name="Kanehisa M."/>
            <person name="Yamashita A."/>
            <person name="Oshima K."/>
            <person name="Furuya K."/>
            <person name="Yoshino C."/>
            <person name="Shiba T."/>
            <person name="Hattori M."/>
            <person name="Ogasawara N."/>
            <person name="Hayashi H."/>
            <person name="Hiramatsu K."/>
        </authorList>
    </citation>
    <scope>NUCLEOTIDE SEQUENCE [LARGE SCALE GENOMIC DNA]</scope>
    <source>
        <strain>Mu50 / ATCC 700699</strain>
    </source>
</reference>